<feature type="chain" id="PRO_0000131302" description="Large ribosomal subunit protein uL18">
    <location>
        <begin position="1"/>
        <end position="119"/>
    </location>
</feature>
<keyword id="KW-1185">Reference proteome</keyword>
<keyword id="KW-0687">Ribonucleoprotein</keyword>
<keyword id="KW-0689">Ribosomal protein</keyword>
<keyword id="KW-0694">RNA-binding</keyword>
<keyword id="KW-0699">rRNA-binding</keyword>
<comment type="function">
    <text evidence="1">This is one of the proteins that bind and probably mediate the attachment of the 5S RNA into the large ribosomal subunit, where it forms part of the central protuberance.</text>
</comment>
<comment type="subunit">
    <text evidence="1">Part of the 50S ribosomal subunit; part of the 5S rRNA/L5/L18/L25 subcomplex. Contacts the 5S and 23S rRNAs.</text>
</comment>
<comment type="similarity">
    <text evidence="1">Belongs to the universal ribosomal protein uL18 family.</text>
</comment>
<evidence type="ECO:0000255" key="1">
    <source>
        <dbReference type="HAMAP-Rule" id="MF_01337"/>
    </source>
</evidence>
<evidence type="ECO:0000305" key="2"/>
<dbReference type="EMBL" id="BA000026">
    <property type="protein sequence ID" value="BAC44787.1"/>
    <property type="molecule type" value="Genomic_DNA"/>
</dbReference>
<dbReference type="RefSeq" id="WP_011077815.1">
    <property type="nucleotide sequence ID" value="NC_004432.1"/>
</dbReference>
<dbReference type="SMR" id="Q8EUC9"/>
<dbReference type="FunCoup" id="Q8EUC9">
    <property type="interactions" value="242"/>
</dbReference>
<dbReference type="STRING" id="272633.gene:10732121"/>
<dbReference type="KEGG" id="mpe:MYPE10010"/>
<dbReference type="eggNOG" id="COG0256">
    <property type="taxonomic scope" value="Bacteria"/>
</dbReference>
<dbReference type="HOGENOM" id="CLU_098841_0_1_14"/>
<dbReference type="InParanoid" id="Q8EUC9"/>
<dbReference type="Proteomes" id="UP000002522">
    <property type="component" value="Chromosome"/>
</dbReference>
<dbReference type="GO" id="GO:0005737">
    <property type="term" value="C:cytoplasm"/>
    <property type="evidence" value="ECO:0007669"/>
    <property type="project" value="UniProtKB-ARBA"/>
</dbReference>
<dbReference type="GO" id="GO:1990904">
    <property type="term" value="C:ribonucleoprotein complex"/>
    <property type="evidence" value="ECO:0007669"/>
    <property type="project" value="UniProtKB-KW"/>
</dbReference>
<dbReference type="GO" id="GO:0005840">
    <property type="term" value="C:ribosome"/>
    <property type="evidence" value="ECO:0007669"/>
    <property type="project" value="UniProtKB-KW"/>
</dbReference>
<dbReference type="GO" id="GO:0008097">
    <property type="term" value="F:5S rRNA binding"/>
    <property type="evidence" value="ECO:0007669"/>
    <property type="project" value="TreeGrafter"/>
</dbReference>
<dbReference type="GO" id="GO:0003735">
    <property type="term" value="F:structural constituent of ribosome"/>
    <property type="evidence" value="ECO:0007669"/>
    <property type="project" value="InterPro"/>
</dbReference>
<dbReference type="GO" id="GO:0006412">
    <property type="term" value="P:translation"/>
    <property type="evidence" value="ECO:0007669"/>
    <property type="project" value="UniProtKB-UniRule"/>
</dbReference>
<dbReference type="CDD" id="cd00432">
    <property type="entry name" value="Ribosomal_L18_L5e"/>
    <property type="match status" value="1"/>
</dbReference>
<dbReference type="Gene3D" id="3.30.420.100">
    <property type="match status" value="1"/>
</dbReference>
<dbReference type="HAMAP" id="MF_01337_B">
    <property type="entry name" value="Ribosomal_uL18_B"/>
    <property type="match status" value="1"/>
</dbReference>
<dbReference type="InterPro" id="IPR004389">
    <property type="entry name" value="Ribosomal_uL18_bac-type"/>
</dbReference>
<dbReference type="InterPro" id="IPR005484">
    <property type="entry name" value="Ribosomal_uL18_bac/euk"/>
</dbReference>
<dbReference type="NCBIfam" id="TIGR00060">
    <property type="entry name" value="L18_bact"/>
    <property type="match status" value="1"/>
</dbReference>
<dbReference type="PANTHER" id="PTHR12899">
    <property type="entry name" value="39S RIBOSOMAL PROTEIN L18, MITOCHONDRIAL"/>
    <property type="match status" value="1"/>
</dbReference>
<dbReference type="PANTHER" id="PTHR12899:SF3">
    <property type="entry name" value="LARGE RIBOSOMAL SUBUNIT PROTEIN UL18M"/>
    <property type="match status" value="1"/>
</dbReference>
<dbReference type="Pfam" id="PF00861">
    <property type="entry name" value="Ribosomal_L18p"/>
    <property type="match status" value="1"/>
</dbReference>
<dbReference type="SUPFAM" id="SSF53137">
    <property type="entry name" value="Translational machinery components"/>
    <property type="match status" value="1"/>
</dbReference>
<sequence length="119" mass="13470">MKNINLNRKEKRTERHKKVLRKFRKIDNDLPRLRITKTNQHIFAQLLDDNKNIVIASSSSVQLKLANGNIENSKKVGEDIAKKAISKKIKAINFDCGGSKYHGRVSALADAARKTGLKF</sequence>
<protein>
    <recommendedName>
        <fullName evidence="1">Large ribosomal subunit protein uL18</fullName>
    </recommendedName>
    <alternativeName>
        <fullName evidence="2">50S ribosomal protein L18</fullName>
    </alternativeName>
</protein>
<name>RL18_MALP2</name>
<reference key="1">
    <citation type="journal article" date="2002" name="Nucleic Acids Res.">
        <title>The complete genomic sequence of Mycoplasma penetrans, an intracellular bacterial pathogen in humans.</title>
        <authorList>
            <person name="Sasaki Y."/>
            <person name="Ishikawa J."/>
            <person name="Yamashita A."/>
            <person name="Oshima K."/>
            <person name="Kenri T."/>
            <person name="Furuya K."/>
            <person name="Yoshino C."/>
            <person name="Horino A."/>
            <person name="Shiba T."/>
            <person name="Sasaki T."/>
            <person name="Hattori M."/>
        </authorList>
    </citation>
    <scope>NUCLEOTIDE SEQUENCE [LARGE SCALE GENOMIC DNA]</scope>
    <source>
        <strain>HF-2</strain>
    </source>
</reference>
<proteinExistence type="inferred from homology"/>
<organism>
    <name type="scientific">Malacoplasma penetrans (strain HF-2)</name>
    <name type="common">Mycoplasma penetrans</name>
    <dbReference type="NCBI Taxonomy" id="272633"/>
    <lineage>
        <taxon>Bacteria</taxon>
        <taxon>Bacillati</taxon>
        <taxon>Mycoplasmatota</taxon>
        <taxon>Mycoplasmoidales</taxon>
        <taxon>Mycoplasmoidaceae</taxon>
        <taxon>Malacoplasma</taxon>
    </lineage>
</organism>
<gene>
    <name evidence="1" type="primary">rplR</name>
    <name type="ordered locus">MYPE10010</name>
</gene>
<accession>Q8EUC9</accession>